<sequence length="423" mass="47832">MASALEQFVNSVRQLSAQGQMTQLCELINKSGELLAKNLSHLDTVLGALDVQEHSLGVLAVLFVKFSMPSVPDFETLFSQVQLFISTCNGEHIRYATDTFAGLCHQLTNALVERKQPLRGIGILKQAIDKMQMNTNQLTSVHADLCQLCLLAKCFKPALPYLDVDMMDICKENGAYDAKHFLCYYYYGGMIYTGLKNFERALYFYEQAITTPAMAVSHIMLESYKKYILVSLILLGKVQQLPKYTSQIVGRFIKPLSNAYHELAQVYSTNNPSELRNLVSKHSETFTRDNNMGLVKQCLSSLYKKNIQRLTKTFLTLSLQDMASRVQLSGPQEAEKYVLHMIEDGEIFASINQKDGMVSFHDNPEKYNNPAMLHNIDQEMLKCIELDERLKAMDQEITVNPQFVQKSMGSQEDDSGNKPSSYS</sequence>
<keyword id="KW-0007">Acetylation</keyword>
<keyword id="KW-0963">Cytoplasm</keyword>
<keyword id="KW-0539">Nucleus</keyword>
<keyword id="KW-0597">Phosphoprotein</keyword>
<keyword id="KW-1185">Reference proteome</keyword>
<keyword id="KW-0736">Signalosome</keyword>
<evidence type="ECO:0000250" key="1">
    <source>
        <dbReference type="UniProtKB" id="Q9UNS2"/>
    </source>
</evidence>
<evidence type="ECO:0000255" key="2">
    <source>
        <dbReference type="PROSITE-ProRule" id="PRU01185"/>
    </source>
</evidence>
<evidence type="ECO:0000256" key="3">
    <source>
        <dbReference type="SAM" id="MobiDB-lite"/>
    </source>
</evidence>
<evidence type="ECO:0000269" key="4">
    <source>
    </source>
</evidence>
<evidence type="ECO:0000269" key="5">
    <source>
    </source>
</evidence>
<evidence type="ECO:0000305" key="6"/>
<evidence type="ECO:0007744" key="7">
    <source>
    </source>
</evidence>
<gene>
    <name type="primary">Cops3</name>
    <name type="synonym">Csn3</name>
</gene>
<comment type="function">
    <text evidence="1 4">Component of the COP9 signalosome complex (CSN), a complex involved in various cellular and developmental processes (By similarity). The CSN complex is an essential regulator of the ubiquitin (Ubl) conjugation pathway by mediating the deneddylation of the cullin subunits of SCF-type E3 ligase complexes, leading to decrease the Ubl ligase activity of SCF-type complexes such as SCF, CSA or DDB2 (By similarity). The complex is also involved in phosphorylation of p53/TP53, c-jun/JUN, IkappaBalpha/NFKBIA, ITPK1 and IRF8/ICSBP, possibly via its association with CK2 and PKD kinases (By similarity). CSN-dependent phosphorylation of TP53 and JUN promotes and protects degradation by the Ubl system, respectively (By similarity). Essential to maintain the survival of epiblast cells and thus the development of the postimplantation embryo (PubMed:12972600).</text>
</comment>
<comment type="subunit">
    <text evidence="1 5">Component of the CSN complex, composed of COPS1/GPS1, COPS2, COPS3, COPS4, COPS5, COPS6, COPS7 (COPS7A or COPS7B), COPS8 and COPS9 (PubMed:9707402). In the complex, it probably interacts directly with COPS1, COPS4, COPS8 and COPS9 (By similarity). Interacts with CK2 and PKD (By similarity). Interacts with the translation initiation factor EIF3S6 and IKBKG (By similarity). Interacts with ERCC6 (By similarity).</text>
</comment>
<comment type="subcellular location">
    <subcellularLocation>
        <location evidence="1">Cytoplasm</location>
    </subcellularLocation>
    <subcellularLocation>
        <location evidence="1">Nucleus</location>
    </subcellularLocation>
</comment>
<comment type="tissue specificity">
    <text evidence="4">Widely expressed.</text>
</comment>
<comment type="disruption phenotype">
    <text evidence="4">Embryos arrest after 5.5 dpc and resorb by 8.5 dpc mainly due to increased cell death.</text>
</comment>
<comment type="similarity">
    <text evidence="6">Belongs to the CSN3 family.</text>
</comment>
<name>CSN3_MOUSE</name>
<proteinExistence type="evidence at protein level"/>
<reference key="1">
    <citation type="journal article" date="1998" name="Curr. Biol.">
        <title>The COP9 complex is conserved between plants and mammals and is related to the 26S proteasome regulatory complex.</title>
        <authorList>
            <person name="Wei N."/>
            <person name="Tsuge T."/>
            <person name="Serino G."/>
            <person name="Dohmae N."/>
            <person name="Takio K."/>
            <person name="Matsui M."/>
            <person name="Deng X.-W."/>
        </authorList>
    </citation>
    <scope>NUCLEOTIDE SEQUENCE [MRNA]</scope>
    <scope>IDENTIFICATION IN THE CSN COMPLEX</scope>
    <source>
        <strain>C57BL/6J</strain>
    </source>
</reference>
<reference key="2">
    <citation type="journal article" date="2004" name="Genome Res.">
        <title>The status, quality, and expansion of the NIH full-length cDNA project: the Mammalian Gene Collection (MGC).</title>
        <authorList>
            <consortium name="The MGC Project Team"/>
        </authorList>
    </citation>
    <scope>NUCLEOTIDE SEQUENCE [LARGE SCALE MRNA]</scope>
    <source>
        <strain>C57BL/6J</strain>
        <tissue>Brain</tissue>
    </source>
</reference>
<reference key="3">
    <citation type="journal article" date="2003" name="Mol. Cell. Biol.">
        <title>COP9 signalosome subunit 3 is essential for maintenance of cell proliferation in the mouse embryonic epiblast.</title>
        <authorList>
            <person name="Yan J."/>
            <person name="Walz K."/>
            <person name="Nakamura H."/>
            <person name="Carattini-Rivera S."/>
            <person name="Zhao Q."/>
            <person name="Vogel H."/>
            <person name="Wei N."/>
            <person name="Justice M.J."/>
            <person name="Bradley A."/>
            <person name="Lupski J.R."/>
        </authorList>
    </citation>
    <scope>FUNCTION</scope>
    <scope>TISSUE SPECIFICITY</scope>
    <scope>DISRUPTION PHENOTYPE</scope>
</reference>
<reference key="4">
    <citation type="journal article" date="2010" name="Cell">
        <title>A tissue-specific atlas of mouse protein phosphorylation and expression.</title>
        <authorList>
            <person name="Huttlin E.L."/>
            <person name="Jedrychowski M.P."/>
            <person name="Elias J.E."/>
            <person name="Goswami T."/>
            <person name="Rad R."/>
            <person name="Beausoleil S.A."/>
            <person name="Villen J."/>
            <person name="Haas W."/>
            <person name="Sowa M.E."/>
            <person name="Gygi S.P."/>
        </authorList>
    </citation>
    <scope>PHOSPHORYLATION [LARGE SCALE ANALYSIS] AT SER-407 AND SER-410</scope>
    <scope>IDENTIFICATION BY MASS SPECTROMETRY [LARGE SCALE ANALYSIS]</scope>
    <source>
        <tissue>Brain</tissue>
        <tissue>Brown adipose tissue</tissue>
        <tissue>Heart</tissue>
        <tissue>Kidney</tissue>
        <tissue>Liver</tissue>
        <tissue>Lung</tissue>
        <tissue>Pancreas</tissue>
        <tissue>Spleen</tissue>
        <tissue>Testis</tissue>
    </source>
</reference>
<accession>O88543</accession>
<organism>
    <name type="scientific">Mus musculus</name>
    <name type="common">Mouse</name>
    <dbReference type="NCBI Taxonomy" id="10090"/>
    <lineage>
        <taxon>Eukaryota</taxon>
        <taxon>Metazoa</taxon>
        <taxon>Chordata</taxon>
        <taxon>Craniata</taxon>
        <taxon>Vertebrata</taxon>
        <taxon>Euteleostomi</taxon>
        <taxon>Mammalia</taxon>
        <taxon>Eutheria</taxon>
        <taxon>Euarchontoglires</taxon>
        <taxon>Glires</taxon>
        <taxon>Rodentia</taxon>
        <taxon>Myomorpha</taxon>
        <taxon>Muroidea</taxon>
        <taxon>Muridae</taxon>
        <taxon>Murinae</taxon>
        <taxon>Mus</taxon>
        <taxon>Mus</taxon>
    </lineage>
</organism>
<protein>
    <recommendedName>
        <fullName>COP9 signalosome complex subunit 3</fullName>
        <shortName>SGN3</shortName>
        <shortName>Signalosome subunit 3</shortName>
    </recommendedName>
    <alternativeName>
        <fullName>JAB1-containing signalosome subunit 3</fullName>
    </alternativeName>
</protein>
<feature type="initiator methionine" description="Removed" evidence="1">
    <location>
        <position position="1"/>
    </location>
</feature>
<feature type="chain" id="PRO_0000120979" description="COP9 signalosome complex subunit 3">
    <location>
        <begin position="2"/>
        <end position="423"/>
    </location>
</feature>
<feature type="domain" description="PCI" evidence="2">
    <location>
        <begin position="197"/>
        <end position="365"/>
    </location>
</feature>
<feature type="region of interest" description="Disordered" evidence="3">
    <location>
        <begin position="402"/>
        <end position="423"/>
    </location>
</feature>
<feature type="modified residue" description="N-acetylalanine" evidence="1">
    <location>
        <position position="2"/>
    </location>
</feature>
<feature type="modified residue" description="Phosphoserine" evidence="7">
    <location>
        <position position="407"/>
    </location>
</feature>
<feature type="modified residue" description="Phosphoserine" evidence="7">
    <location>
        <position position="410"/>
    </location>
</feature>
<feature type="modified residue" description="Phosphoserine" evidence="1">
    <location>
        <position position="423"/>
    </location>
</feature>
<dbReference type="EMBL" id="AF071313">
    <property type="protein sequence ID" value="AAC33900.1"/>
    <property type="molecule type" value="mRNA"/>
</dbReference>
<dbReference type="EMBL" id="BC068179">
    <property type="protein sequence ID" value="AAH68179.1"/>
    <property type="molecule type" value="mRNA"/>
</dbReference>
<dbReference type="CCDS" id="CCDS24778.1"/>
<dbReference type="RefSeq" id="NP_036121.1">
    <property type="nucleotide sequence ID" value="NM_011991.2"/>
</dbReference>
<dbReference type="SMR" id="O88543"/>
<dbReference type="BioGRID" id="205027">
    <property type="interactions" value="41"/>
</dbReference>
<dbReference type="CORUM" id="O88543"/>
<dbReference type="FunCoup" id="O88543">
    <property type="interactions" value="4827"/>
</dbReference>
<dbReference type="IntAct" id="O88543">
    <property type="interactions" value="2"/>
</dbReference>
<dbReference type="MINT" id="O88543"/>
<dbReference type="STRING" id="10090.ENSMUSP00000019517"/>
<dbReference type="GlyGen" id="O88543">
    <property type="glycosylation" value="1 site, 1 O-linked glycan (1 site)"/>
</dbReference>
<dbReference type="iPTMnet" id="O88543"/>
<dbReference type="PhosphoSitePlus" id="O88543"/>
<dbReference type="SwissPalm" id="O88543"/>
<dbReference type="jPOST" id="O88543"/>
<dbReference type="PaxDb" id="10090-ENSMUSP00000019517"/>
<dbReference type="PeptideAtlas" id="O88543"/>
<dbReference type="ProteomicsDB" id="285210"/>
<dbReference type="Pumba" id="O88543"/>
<dbReference type="Antibodypedia" id="13330">
    <property type="antibodies" value="383 antibodies from 38 providers"/>
</dbReference>
<dbReference type="DNASU" id="26572"/>
<dbReference type="Ensembl" id="ENSMUST00000019517.10">
    <property type="protein sequence ID" value="ENSMUSP00000019517.4"/>
    <property type="gene ID" value="ENSMUSG00000019373.12"/>
</dbReference>
<dbReference type="GeneID" id="26572"/>
<dbReference type="KEGG" id="mmu:26572"/>
<dbReference type="UCSC" id="uc007jfa.1">
    <property type="organism name" value="mouse"/>
</dbReference>
<dbReference type="AGR" id="MGI:1349409"/>
<dbReference type="CTD" id="8533"/>
<dbReference type="MGI" id="MGI:1349409">
    <property type="gene designation" value="Cops3"/>
</dbReference>
<dbReference type="VEuPathDB" id="HostDB:ENSMUSG00000019373"/>
<dbReference type="eggNOG" id="KOG2582">
    <property type="taxonomic scope" value="Eukaryota"/>
</dbReference>
<dbReference type="GeneTree" id="ENSGT00940000153653"/>
<dbReference type="HOGENOM" id="CLU_028825_0_1_1"/>
<dbReference type="InParanoid" id="O88543"/>
<dbReference type="OMA" id="NHYHDLV"/>
<dbReference type="OrthoDB" id="29061at2759"/>
<dbReference type="PhylomeDB" id="O88543"/>
<dbReference type="TreeFam" id="TF101146"/>
<dbReference type="Reactome" id="R-MMU-5696394">
    <property type="pathway name" value="DNA Damage Recognition in GG-NER"/>
</dbReference>
<dbReference type="Reactome" id="R-MMU-6781823">
    <property type="pathway name" value="Formation of TC-NER Pre-Incision Complex"/>
</dbReference>
<dbReference type="Reactome" id="R-MMU-8856825">
    <property type="pathway name" value="Cargo recognition for clathrin-mediated endocytosis"/>
</dbReference>
<dbReference type="Reactome" id="R-MMU-8951664">
    <property type="pathway name" value="Neddylation"/>
</dbReference>
<dbReference type="BioGRID-ORCS" id="26572">
    <property type="hits" value="28 hits in 76 CRISPR screens"/>
</dbReference>
<dbReference type="ChiTaRS" id="Cops3">
    <property type="organism name" value="mouse"/>
</dbReference>
<dbReference type="PRO" id="PR:O88543"/>
<dbReference type="Proteomes" id="UP000000589">
    <property type="component" value="Chromosome 11"/>
</dbReference>
<dbReference type="RNAct" id="O88543">
    <property type="molecule type" value="protein"/>
</dbReference>
<dbReference type="Bgee" id="ENSMUSG00000019373">
    <property type="expression patterns" value="Expressed in spermatocyte and 284 other cell types or tissues"/>
</dbReference>
<dbReference type="ExpressionAtlas" id="O88543">
    <property type="expression patterns" value="baseline and differential"/>
</dbReference>
<dbReference type="GO" id="GO:0008180">
    <property type="term" value="C:COP9 signalosome"/>
    <property type="evidence" value="ECO:0000314"/>
    <property type="project" value="MGI"/>
</dbReference>
<dbReference type="GO" id="GO:0005829">
    <property type="term" value="C:cytosol"/>
    <property type="evidence" value="ECO:0007669"/>
    <property type="project" value="Ensembl"/>
</dbReference>
<dbReference type="GO" id="GO:0005654">
    <property type="term" value="C:nucleoplasm"/>
    <property type="evidence" value="ECO:0007669"/>
    <property type="project" value="Ensembl"/>
</dbReference>
<dbReference type="GO" id="GO:0048471">
    <property type="term" value="C:perinuclear region of cytoplasm"/>
    <property type="evidence" value="ECO:0007669"/>
    <property type="project" value="Ensembl"/>
</dbReference>
<dbReference type="GO" id="GO:0001701">
    <property type="term" value="P:in utero embryonic development"/>
    <property type="evidence" value="ECO:0000315"/>
    <property type="project" value="MGI"/>
</dbReference>
<dbReference type="GO" id="GO:0000338">
    <property type="term" value="P:protein deneddylation"/>
    <property type="evidence" value="ECO:0007669"/>
    <property type="project" value="Ensembl"/>
</dbReference>
<dbReference type="GO" id="GO:0043516">
    <property type="term" value="P:regulation of DNA damage response, signal transduction by p53 class mediator"/>
    <property type="evidence" value="ECO:0007669"/>
    <property type="project" value="Ensembl"/>
</dbReference>
<dbReference type="FunFam" id="1.10.10.10:FF:000354">
    <property type="entry name" value="COP9 signalosome complex subunit 3"/>
    <property type="match status" value="1"/>
</dbReference>
<dbReference type="FunFam" id="1.25.40.570:FF:000008">
    <property type="entry name" value="COP9 signalosome complex subunit 3"/>
    <property type="match status" value="1"/>
</dbReference>
<dbReference type="Gene3D" id="1.25.40.570">
    <property type="match status" value="1"/>
</dbReference>
<dbReference type="InterPro" id="IPR055089">
    <property type="entry name" value="COP9_N"/>
</dbReference>
<dbReference type="InterPro" id="IPR050756">
    <property type="entry name" value="CSN3"/>
</dbReference>
<dbReference type="InterPro" id="IPR048621">
    <property type="entry name" value="CSN3_C"/>
</dbReference>
<dbReference type="InterPro" id="IPR000717">
    <property type="entry name" value="PCI_dom"/>
</dbReference>
<dbReference type="InterPro" id="IPR036390">
    <property type="entry name" value="WH_DNA-bd_sf"/>
</dbReference>
<dbReference type="PANTHER" id="PTHR10758">
    <property type="entry name" value="26S PROTEASOME NON-ATPASE REGULATORY SUBUNIT 3/COP9 SIGNALOSOME COMPLEX SUBUNIT 3"/>
    <property type="match status" value="1"/>
</dbReference>
<dbReference type="PANTHER" id="PTHR10758:SF1">
    <property type="entry name" value="COP9 SIGNALOSOME COMPLEX SUBUNIT 3"/>
    <property type="match status" value="1"/>
</dbReference>
<dbReference type="Pfam" id="PF22788">
    <property type="entry name" value="COP9_hel_rpt"/>
    <property type="match status" value="1"/>
</dbReference>
<dbReference type="Pfam" id="PF21215">
    <property type="entry name" value="CSN3-like_C"/>
    <property type="match status" value="1"/>
</dbReference>
<dbReference type="Pfam" id="PF01399">
    <property type="entry name" value="PCI"/>
    <property type="match status" value="1"/>
</dbReference>
<dbReference type="SMART" id="SM00088">
    <property type="entry name" value="PINT"/>
    <property type="match status" value="1"/>
</dbReference>
<dbReference type="SUPFAM" id="SSF46785">
    <property type="entry name" value="Winged helix' DNA-binding domain"/>
    <property type="match status" value="1"/>
</dbReference>
<dbReference type="PROSITE" id="PS50250">
    <property type="entry name" value="PCI"/>
    <property type="match status" value="1"/>
</dbReference>